<dbReference type="EC" id="3.-.-.-" evidence="2"/>
<dbReference type="EMBL" id="CP000560">
    <property type="protein sequence ID" value="ABS75764.1"/>
    <property type="molecule type" value="Genomic_DNA"/>
</dbReference>
<dbReference type="RefSeq" id="WP_012118673.1">
    <property type="nucleotide sequence ID" value="NC_009725.2"/>
</dbReference>
<dbReference type="SMR" id="A7Z9T8"/>
<dbReference type="GeneID" id="93082579"/>
<dbReference type="KEGG" id="bay:RBAM_034350"/>
<dbReference type="HOGENOM" id="CLU_017168_0_1_9"/>
<dbReference type="Proteomes" id="UP000001120">
    <property type="component" value="Chromosome"/>
</dbReference>
<dbReference type="GO" id="GO:0004519">
    <property type="term" value="F:endonuclease activity"/>
    <property type="evidence" value="ECO:0007669"/>
    <property type="project" value="UniProtKB-UniRule"/>
</dbReference>
<dbReference type="GO" id="GO:0006289">
    <property type="term" value="P:nucleotide-excision repair"/>
    <property type="evidence" value="ECO:0007669"/>
    <property type="project" value="InterPro"/>
</dbReference>
<dbReference type="GO" id="GO:0006290">
    <property type="term" value="P:pyrimidine dimer repair"/>
    <property type="evidence" value="ECO:0007669"/>
    <property type="project" value="UniProtKB-UniRule"/>
</dbReference>
<dbReference type="GO" id="GO:0009411">
    <property type="term" value="P:response to UV"/>
    <property type="evidence" value="ECO:0007669"/>
    <property type="project" value="InterPro"/>
</dbReference>
<dbReference type="Gene3D" id="3.20.20.150">
    <property type="entry name" value="Divalent-metal-dependent TIM barrel enzymes"/>
    <property type="match status" value="1"/>
</dbReference>
<dbReference type="HAMAP" id="MF_00606">
    <property type="entry name" value="UV_endonuclease"/>
    <property type="match status" value="1"/>
</dbReference>
<dbReference type="InterPro" id="IPR004601">
    <property type="entry name" value="UvdE"/>
</dbReference>
<dbReference type="InterPro" id="IPR023520">
    <property type="entry name" value="UvdE_bac"/>
</dbReference>
<dbReference type="InterPro" id="IPR036237">
    <property type="entry name" value="Xyl_isomerase-like_sf"/>
</dbReference>
<dbReference type="NCBIfam" id="TIGR00629">
    <property type="entry name" value="uvde"/>
    <property type="match status" value="1"/>
</dbReference>
<dbReference type="PANTHER" id="PTHR31290">
    <property type="entry name" value="UV-DAMAGE ENDONUCLEASE"/>
    <property type="match status" value="1"/>
</dbReference>
<dbReference type="PANTHER" id="PTHR31290:SF5">
    <property type="entry name" value="UV-DAMAGE ENDONUCLEASE"/>
    <property type="match status" value="1"/>
</dbReference>
<dbReference type="Pfam" id="PF03851">
    <property type="entry name" value="UvdE"/>
    <property type="match status" value="1"/>
</dbReference>
<dbReference type="SUPFAM" id="SSF51658">
    <property type="entry name" value="Xylose isomerase-like"/>
    <property type="match status" value="1"/>
</dbReference>
<evidence type="ECO:0000250" key="1"/>
<evidence type="ECO:0000255" key="2">
    <source>
        <dbReference type="HAMAP-Rule" id="MF_00606"/>
    </source>
</evidence>
<feature type="chain" id="PRO_1000006543" description="UV DNA damage endonuclease">
    <location>
        <begin position="1"/>
        <end position="320"/>
    </location>
</feature>
<gene>
    <name evidence="2" type="primary">uvsE</name>
    <name type="ordered locus">RBAM_034350</name>
</gene>
<name>UVSE_BACVZ</name>
<proteinExistence type="inferred from homology"/>
<comment type="function">
    <text evidence="1">Component in a DNA repair pathway. Removal of UV LIGHT damaged nucleotides. Recognizes pyrimidine dimers and cleave a phosphodiester bond immediately 5' to the lesion (By similarity).</text>
</comment>
<comment type="similarity">
    <text evidence="2">Belongs to the uve1/UvsE family.</text>
</comment>
<protein>
    <recommendedName>
        <fullName evidence="2">UV DNA damage endonuclease</fullName>
        <shortName evidence="2">UV-endonuclease</shortName>
        <shortName evidence="2">UVED</shortName>
        <ecNumber evidence="2">3.-.-.-</ecNumber>
    </recommendedName>
</protein>
<keyword id="KW-0227">DNA damage</keyword>
<keyword id="KW-0228">DNA excision</keyword>
<keyword id="KW-0234">DNA repair</keyword>
<keyword id="KW-0255">Endonuclease</keyword>
<keyword id="KW-0378">Hydrolase</keyword>
<keyword id="KW-0540">Nuclease</keyword>
<reference key="1">
    <citation type="journal article" date="2007" name="Nat. Biotechnol.">
        <title>Comparative analysis of the complete genome sequence of the plant growth-promoting bacterium Bacillus amyloliquefaciens FZB42.</title>
        <authorList>
            <person name="Chen X.H."/>
            <person name="Koumoutsi A."/>
            <person name="Scholz R."/>
            <person name="Eisenreich A."/>
            <person name="Schneider K."/>
            <person name="Heinemeyer I."/>
            <person name="Morgenstern B."/>
            <person name="Voss B."/>
            <person name="Hess W.R."/>
            <person name="Reva O."/>
            <person name="Junge H."/>
            <person name="Voigt B."/>
            <person name="Jungblut P.R."/>
            <person name="Vater J."/>
            <person name="Suessmuth R."/>
            <person name="Liesegang H."/>
            <person name="Strittmatter A."/>
            <person name="Gottschalk G."/>
            <person name="Borriss R."/>
        </authorList>
    </citation>
    <scope>NUCLEOTIDE SEQUENCE [LARGE SCALE GENOMIC DNA]</scope>
    <source>
        <strain>DSM 23117 / BGSC 10A6 / LMG 26770 / FZB42</strain>
    </source>
</reference>
<organism>
    <name type="scientific">Bacillus velezensis (strain DSM 23117 / BGSC 10A6 / LMG 26770 / FZB42)</name>
    <name type="common">Bacillus amyloliquefaciens subsp. plantarum</name>
    <dbReference type="NCBI Taxonomy" id="326423"/>
    <lineage>
        <taxon>Bacteria</taxon>
        <taxon>Bacillati</taxon>
        <taxon>Bacillota</taxon>
        <taxon>Bacilli</taxon>
        <taxon>Bacillales</taxon>
        <taxon>Bacillaceae</taxon>
        <taxon>Bacillus</taxon>
        <taxon>Bacillus amyloliquefaciens group</taxon>
    </lineage>
</organism>
<sequence length="320" mass="36656">MLFRFGFVANAMCLWDASPAKTLTYARYTKLSRSERKDALLSVTKANLTNTLRTIHYVVGHGIPLYRFSSSIVPLATHPDVLWDFVTPFRQEFCEIGGLVRKYDLRTSFHPNQFTLFTSPKQEITANAVKDMAYHYDMLDAMGIANRSVINIHVGGAYGDKQSALGRFRVNLKELPDVIKQRMTLENDDKTYTSEETLSVCEQEGIPFVFDYHHFYANPTDDADLDDILPRMIKTWQRIGLKPKVHLSSPKSESAIRSHADYVDANFILPVLERFRQWDTDIDFMIEAKEKDRALLRLVEELSAIRGVKRLAGGVLKWKA</sequence>
<accession>A7Z9T8</accession>